<name>TIG_PELPD</name>
<evidence type="ECO:0000255" key="1">
    <source>
        <dbReference type="HAMAP-Rule" id="MF_00303"/>
    </source>
</evidence>
<sequence>MQVNVETISPVSKKVSIEIPADQVNSEIEKTYATIQKRAKIQGFRPGKAPLQLIKRTYADSMRDEVMRRFYETTLFKTLAEHKIEPIDAPTVECDILEEGTPFKYSALVEVMPEVLLTQYTGLEITKERYVFDPQKIEDEIARMRDGMAQLVPVEGDVAVEMGHMVTIDYAFSVDGFPEESTSAENAVVEVGAHRLLPEFEDQLVGMKCGESKHVTVTLPEAYRNPEVAGKEGAFMVTLNEIKRKELPELNDEFAQQFGEFETVEQLREKMTEYHQQHEQDRIEQEQRETVIQALIEKNPLDVPQSMVKRQVEQMLQNLKNRLKSRNMSMEMMGMDDDSFRERVRDSATDKVRGGLLLMALIEKEDFSVSDEEIEKRYEKLAGGNEEMLERIKEHYTSSPSVRHSLIAEIKEDKAVRFLLDNAVITETDPAETAAEA</sequence>
<proteinExistence type="inferred from homology"/>
<keyword id="KW-0131">Cell cycle</keyword>
<keyword id="KW-0132">Cell division</keyword>
<keyword id="KW-0143">Chaperone</keyword>
<keyword id="KW-0963">Cytoplasm</keyword>
<keyword id="KW-0413">Isomerase</keyword>
<keyword id="KW-1185">Reference proteome</keyword>
<keyword id="KW-0697">Rotamase</keyword>
<feature type="chain" id="PRO_1000022724" description="Trigger factor">
    <location>
        <begin position="1"/>
        <end position="437"/>
    </location>
</feature>
<feature type="domain" description="PPIase FKBP-type" evidence="1">
    <location>
        <begin position="163"/>
        <end position="248"/>
    </location>
</feature>
<comment type="function">
    <text evidence="1">Involved in protein export. Acts as a chaperone by maintaining the newly synthesized protein in an open conformation. Functions as a peptidyl-prolyl cis-trans isomerase.</text>
</comment>
<comment type="catalytic activity">
    <reaction evidence="1">
        <text>[protein]-peptidylproline (omega=180) = [protein]-peptidylproline (omega=0)</text>
        <dbReference type="Rhea" id="RHEA:16237"/>
        <dbReference type="Rhea" id="RHEA-COMP:10747"/>
        <dbReference type="Rhea" id="RHEA-COMP:10748"/>
        <dbReference type="ChEBI" id="CHEBI:83833"/>
        <dbReference type="ChEBI" id="CHEBI:83834"/>
        <dbReference type="EC" id="5.2.1.8"/>
    </reaction>
</comment>
<comment type="subcellular location">
    <subcellularLocation>
        <location>Cytoplasm</location>
    </subcellularLocation>
    <text evidence="1">About half TF is bound to the ribosome near the polypeptide exit tunnel while the other half is free in the cytoplasm.</text>
</comment>
<comment type="domain">
    <text evidence="1">Consists of 3 domains; the N-terminus binds the ribosome, the middle domain has PPIase activity, while the C-terminus has intrinsic chaperone activity on its own.</text>
</comment>
<comment type="similarity">
    <text evidence="1">Belongs to the FKBP-type PPIase family. Tig subfamily.</text>
</comment>
<reference key="1">
    <citation type="submission" date="2006-10" db="EMBL/GenBank/DDBJ databases">
        <title>Complete sequence of chromosome of Pelobacter propionicus DSM 2379.</title>
        <authorList>
            <consortium name="US DOE Joint Genome Institute"/>
            <person name="Copeland A."/>
            <person name="Lucas S."/>
            <person name="Lapidus A."/>
            <person name="Barry K."/>
            <person name="Detter J.C."/>
            <person name="Glavina del Rio T."/>
            <person name="Hammon N."/>
            <person name="Israni S."/>
            <person name="Dalin E."/>
            <person name="Tice H."/>
            <person name="Pitluck S."/>
            <person name="Saunders E."/>
            <person name="Brettin T."/>
            <person name="Bruce D."/>
            <person name="Han C."/>
            <person name="Tapia R."/>
            <person name="Schmutz J."/>
            <person name="Larimer F."/>
            <person name="Land M."/>
            <person name="Hauser L."/>
            <person name="Kyrpides N."/>
            <person name="Kim E."/>
            <person name="Lovley D."/>
            <person name="Richardson P."/>
        </authorList>
    </citation>
    <scope>NUCLEOTIDE SEQUENCE [LARGE SCALE GENOMIC DNA]</scope>
    <source>
        <strain>DSM 2379 / NBRC 103807 / OttBd1</strain>
    </source>
</reference>
<organism>
    <name type="scientific">Pelobacter propionicus (strain DSM 2379 / NBRC 103807 / OttBd1)</name>
    <dbReference type="NCBI Taxonomy" id="338966"/>
    <lineage>
        <taxon>Bacteria</taxon>
        <taxon>Pseudomonadati</taxon>
        <taxon>Thermodesulfobacteriota</taxon>
        <taxon>Desulfuromonadia</taxon>
        <taxon>Desulfuromonadales</taxon>
        <taxon>Desulfuromonadaceae</taxon>
        <taxon>Pelobacter</taxon>
    </lineage>
</organism>
<protein>
    <recommendedName>
        <fullName evidence="1">Trigger factor</fullName>
        <shortName evidence="1">TF</shortName>
        <ecNumber evidence="1">5.2.1.8</ecNumber>
    </recommendedName>
    <alternativeName>
        <fullName evidence="1">PPIase</fullName>
    </alternativeName>
</protein>
<accession>A1AN86</accession>
<dbReference type="EC" id="5.2.1.8" evidence="1"/>
<dbReference type="EMBL" id="CP000482">
    <property type="protein sequence ID" value="ABK98806.1"/>
    <property type="molecule type" value="Genomic_DNA"/>
</dbReference>
<dbReference type="RefSeq" id="WP_011735108.1">
    <property type="nucleotide sequence ID" value="NC_008609.1"/>
</dbReference>
<dbReference type="SMR" id="A1AN86"/>
<dbReference type="STRING" id="338966.Ppro_1184"/>
<dbReference type="KEGG" id="ppd:Ppro_1184"/>
<dbReference type="eggNOG" id="COG0544">
    <property type="taxonomic scope" value="Bacteria"/>
</dbReference>
<dbReference type="HOGENOM" id="CLU_033058_2_2_7"/>
<dbReference type="OrthoDB" id="9767721at2"/>
<dbReference type="Proteomes" id="UP000006732">
    <property type="component" value="Chromosome"/>
</dbReference>
<dbReference type="GO" id="GO:0005737">
    <property type="term" value="C:cytoplasm"/>
    <property type="evidence" value="ECO:0007669"/>
    <property type="project" value="UniProtKB-SubCell"/>
</dbReference>
<dbReference type="GO" id="GO:0003755">
    <property type="term" value="F:peptidyl-prolyl cis-trans isomerase activity"/>
    <property type="evidence" value="ECO:0007669"/>
    <property type="project" value="UniProtKB-UniRule"/>
</dbReference>
<dbReference type="GO" id="GO:0044183">
    <property type="term" value="F:protein folding chaperone"/>
    <property type="evidence" value="ECO:0007669"/>
    <property type="project" value="TreeGrafter"/>
</dbReference>
<dbReference type="GO" id="GO:0043022">
    <property type="term" value="F:ribosome binding"/>
    <property type="evidence" value="ECO:0007669"/>
    <property type="project" value="TreeGrafter"/>
</dbReference>
<dbReference type="GO" id="GO:0051083">
    <property type="term" value="P:'de novo' cotranslational protein folding"/>
    <property type="evidence" value="ECO:0007669"/>
    <property type="project" value="TreeGrafter"/>
</dbReference>
<dbReference type="GO" id="GO:0051301">
    <property type="term" value="P:cell division"/>
    <property type="evidence" value="ECO:0007669"/>
    <property type="project" value="UniProtKB-KW"/>
</dbReference>
<dbReference type="GO" id="GO:0061077">
    <property type="term" value="P:chaperone-mediated protein folding"/>
    <property type="evidence" value="ECO:0007669"/>
    <property type="project" value="TreeGrafter"/>
</dbReference>
<dbReference type="GO" id="GO:0015031">
    <property type="term" value="P:protein transport"/>
    <property type="evidence" value="ECO:0007669"/>
    <property type="project" value="UniProtKB-UniRule"/>
</dbReference>
<dbReference type="GO" id="GO:0043335">
    <property type="term" value="P:protein unfolding"/>
    <property type="evidence" value="ECO:0007669"/>
    <property type="project" value="TreeGrafter"/>
</dbReference>
<dbReference type="Gene3D" id="3.10.50.40">
    <property type="match status" value="1"/>
</dbReference>
<dbReference type="Gene3D" id="3.30.70.1050">
    <property type="entry name" value="Trigger factor ribosome-binding domain"/>
    <property type="match status" value="1"/>
</dbReference>
<dbReference type="Gene3D" id="1.10.3120.10">
    <property type="entry name" value="Trigger factor, C-terminal domain"/>
    <property type="match status" value="1"/>
</dbReference>
<dbReference type="HAMAP" id="MF_00303">
    <property type="entry name" value="Trigger_factor_Tig"/>
    <property type="match status" value="1"/>
</dbReference>
<dbReference type="InterPro" id="IPR046357">
    <property type="entry name" value="PPIase_dom_sf"/>
</dbReference>
<dbReference type="InterPro" id="IPR001179">
    <property type="entry name" value="PPIase_FKBP_dom"/>
</dbReference>
<dbReference type="InterPro" id="IPR005215">
    <property type="entry name" value="Trig_fac"/>
</dbReference>
<dbReference type="InterPro" id="IPR008880">
    <property type="entry name" value="Trigger_fac_C"/>
</dbReference>
<dbReference type="InterPro" id="IPR037041">
    <property type="entry name" value="Trigger_fac_C_sf"/>
</dbReference>
<dbReference type="InterPro" id="IPR008881">
    <property type="entry name" value="Trigger_fac_ribosome-bd_bac"/>
</dbReference>
<dbReference type="InterPro" id="IPR036611">
    <property type="entry name" value="Trigger_fac_ribosome-bd_sf"/>
</dbReference>
<dbReference type="InterPro" id="IPR027304">
    <property type="entry name" value="Trigger_fact/SurA_dom_sf"/>
</dbReference>
<dbReference type="NCBIfam" id="TIGR00115">
    <property type="entry name" value="tig"/>
    <property type="match status" value="1"/>
</dbReference>
<dbReference type="PANTHER" id="PTHR30560">
    <property type="entry name" value="TRIGGER FACTOR CHAPERONE AND PEPTIDYL-PROLYL CIS/TRANS ISOMERASE"/>
    <property type="match status" value="1"/>
</dbReference>
<dbReference type="PANTHER" id="PTHR30560:SF3">
    <property type="entry name" value="TRIGGER FACTOR-LIKE PROTEIN TIG, CHLOROPLASTIC"/>
    <property type="match status" value="1"/>
</dbReference>
<dbReference type="Pfam" id="PF00254">
    <property type="entry name" value="FKBP_C"/>
    <property type="match status" value="1"/>
</dbReference>
<dbReference type="Pfam" id="PF05698">
    <property type="entry name" value="Trigger_C"/>
    <property type="match status" value="1"/>
</dbReference>
<dbReference type="Pfam" id="PF05697">
    <property type="entry name" value="Trigger_N"/>
    <property type="match status" value="1"/>
</dbReference>
<dbReference type="PIRSF" id="PIRSF003095">
    <property type="entry name" value="Trigger_factor"/>
    <property type="match status" value="1"/>
</dbReference>
<dbReference type="SUPFAM" id="SSF54534">
    <property type="entry name" value="FKBP-like"/>
    <property type="match status" value="1"/>
</dbReference>
<dbReference type="SUPFAM" id="SSF109998">
    <property type="entry name" value="Triger factor/SurA peptide-binding domain-like"/>
    <property type="match status" value="1"/>
</dbReference>
<dbReference type="SUPFAM" id="SSF102735">
    <property type="entry name" value="Trigger factor ribosome-binding domain"/>
    <property type="match status" value="1"/>
</dbReference>
<gene>
    <name evidence="1" type="primary">tig</name>
    <name type="ordered locus">Ppro_1184</name>
</gene>